<organism>
    <name type="scientific">Synechococcus sp. (strain CC9902)</name>
    <dbReference type="NCBI Taxonomy" id="316279"/>
    <lineage>
        <taxon>Bacteria</taxon>
        <taxon>Bacillati</taxon>
        <taxon>Cyanobacteriota</taxon>
        <taxon>Cyanophyceae</taxon>
        <taxon>Synechococcales</taxon>
        <taxon>Synechococcaceae</taxon>
        <taxon>Synechococcus</taxon>
    </lineage>
</organism>
<reference key="1">
    <citation type="submission" date="2005-08" db="EMBL/GenBank/DDBJ databases">
        <title>Complete sequence of Synechococcus sp. CC9902.</title>
        <authorList>
            <person name="Copeland A."/>
            <person name="Lucas S."/>
            <person name="Lapidus A."/>
            <person name="Barry K."/>
            <person name="Detter J.C."/>
            <person name="Glavina T."/>
            <person name="Hammon N."/>
            <person name="Israni S."/>
            <person name="Pitluck S."/>
            <person name="Martinez M."/>
            <person name="Schmutz J."/>
            <person name="Larimer F."/>
            <person name="Land M."/>
            <person name="Kyrpides N."/>
            <person name="Ivanova N."/>
            <person name="Richardson P."/>
        </authorList>
    </citation>
    <scope>NUCLEOTIDE SEQUENCE [LARGE SCALE GENOMIC DNA]</scope>
    <source>
        <strain>CC9902</strain>
    </source>
</reference>
<proteinExistence type="inferred from homology"/>
<name>ATP6_SYNS9</name>
<keyword id="KW-0066">ATP synthesis</keyword>
<keyword id="KW-0138">CF(0)</keyword>
<keyword id="KW-0375">Hydrogen ion transport</keyword>
<keyword id="KW-0406">Ion transport</keyword>
<keyword id="KW-0472">Membrane</keyword>
<keyword id="KW-1185">Reference proteome</keyword>
<keyword id="KW-0793">Thylakoid</keyword>
<keyword id="KW-0812">Transmembrane</keyword>
<keyword id="KW-1133">Transmembrane helix</keyword>
<keyword id="KW-0813">Transport</keyword>
<comment type="function">
    <text evidence="1">Key component of the proton channel; it plays a direct role in the translocation of protons across the membrane.</text>
</comment>
<comment type="subunit">
    <text evidence="1">F-type ATPases have 2 components, CF(1) - the catalytic core - and CF(0) - the membrane proton channel. CF(1) has five subunits: alpha(3), beta(3), gamma(1), delta(1), epsilon(1). CF(0) has four main subunits: a, b, b' and c.</text>
</comment>
<comment type="subcellular location">
    <subcellularLocation>
        <location evidence="1">Cellular thylakoid membrane</location>
        <topology evidence="1">Multi-pass membrane protein</topology>
    </subcellularLocation>
</comment>
<comment type="similarity">
    <text evidence="1">Belongs to the ATPase A chain family.</text>
</comment>
<evidence type="ECO:0000255" key="1">
    <source>
        <dbReference type="HAMAP-Rule" id="MF_01393"/>
    </source>
</evidence>
<dbReference type="EMBL" id="CP000097">
    <property type="protein sequence ID" value="ABB25451.1"/>
    <property type="molecule type" value="Genomic_DNA"/>
</dbReference>
<dbReference type="RefSeq" id="WP_011359301.1">
    <property type="nucleotide sequence ID" value="NC_007513.1"/>
</dbReference>
<dbReference type="SMR" id="Q3AZM6"/>
<dbReference type="STRING" id="316279.Syncc9902_0483"/>
<dbReference type="KEGG" id="sye:Syncc9902_0483"/>
<dbReference type="eggNOG" id="COG0356">
    <property type="taxonomic scope" value="Bacteria"/>
</dbReference>
<dbReference type="HOGENOM" id="CLU_041018_2_4_3"/>
<dbReference type="OrthoDB" id="9789241at2"/>
<dbReference type="Proteomes" id="UP000002712">
    <property type="component" value="Chromosome"/>
</dbReference>
<dbReference type="GO" id="GO:0031676">
    <property type="term" value="C:plasma membrane-derived thylakoid membrane"/>
    <property type="evidence" value="ECO:0007669"/>
    <property type="project" value="UniProtKB-SubCell"/>
</dbReference>
<dbReference type="GO" id="GO:0045259">
    <property type="term" value="C:proton-transporting ATP synthase complex"/>
    <property type="evidence" value="ECO:0007669"/>
    <property type="project" value="UniProtKB-KW"/>
</dbReference>
<dbReference type="GO" id="GO:0046933">
    <property type="term" value="F:proton-transporting ATP synthase activity, rotational mechanism"/>
    <property type="evidence" value="ECO:0007669"/>
    <property type="project" value="UniProtKB-UniRule"/>
</dbReference>
<dbReference type="CDD" id="cd00310">
    <property type="entry name" value="ATP-synt_Fo_a_6"/>
    <property type="match status" value="1"/>
</dbReference>
<dbReference type="FunFam" id="1.20.120.220:FF:000001">
    <property type="entry name" value="ATP synthase subunit a, chloroplastic"/>
    <property type="match status" value="1"/>
</dbReference>
<dbReference type="Gene3D" id="1.20.120.220">
    <property type="entry name" value="ATP synthase, F0 complex, subunit A"/>
    <property type="match status" value="1"/>
</dbReference>
<dbReference type="HAMAP" id="MF_01393">
    <property type="entry name" value="ATP_synth_a_bact"/>
    <property type="match status" value="1"/>
</dbReference>
<dbReference type="InterPro" id="IPR045082">
    <property type="entry name" value="ATP_syn_F0_a_bact/chloroplast"/>
</dbReference>
<dbReference type="InterPro" id="IPR000568">
    <property type="entry name" value="ATP_synth_F0_asu"/>
</dbReference>
<dbReference type="InterPro" id="IPR023011">
    <property type="entry name" value="ATP_synth_F0_asu_AS"/>
</dbReference>
<dbReference type="InterPro" id="IPR035908">
    <property type="entry name" value="F0_ATP_A_sf"/>
</dbReference>
<dbReference type="NCBIfam" id="TIGR01131">
    <property type="entry name" value="ATP_synt_6_or_A"/>
    <property type="match status" value="1"/>
</dbReference>
<dbReference type="PANTHER" id="PTHR42823">
    <property type="entry name" value="ATP SYNTHASE SUBUNIT A, CHLOROPLASTIC"/>
    <property type="match status" value="1"/>
</dbReference>
<dbReference type="PANTHER" id="PTHR42823:SF3">
    <property type="entry name" value="ATP SYNTHASE SUBUNIT A, CHLOROPLASTIC"/>
    <property type="match status" value="1"/>
</dbReference>
<dbReference type="Pfam" id="PF00119">
    <property type="entry name" value="ATP-synt_A"/>
    <property type="match status" value="1"/>
</dbReference>
<dbReference type="PRINTS" id="PR00123">
    <property type="entry name" value="ATPASEA"/>
</dbReference>
<dbReference type="SUPFAM" id="SSF81336">
    <property type="entry name" value="F1F0 ATP synthase subunit A"/>
    <property type="match status" value="1"/>
</dbReference>
<dbReference type="PROSITE" id="PS00449">
    <property type="entry name" value="ATPASE_A"/>
    <property type="match status" value="1"/>
</dbReference>
<feature type="chain" id="PRO_0000362487" description="ATP synthase subunit a">
    <location>
        <begin position="1"/>
        <end position="241"/>
    </location>
</feature>
<feature type="transmembrane region" description="Helical" evidence="1">
    <location>
        <begin position="30"/>
        <end position="50"/>
    </location>
</feature>
<feature type="transmembrane region" description="Helical" evidence="1">
    <location>
        <begin position="89"/>
        <end position="109"/>
    </location>
</feature>
<feature type="transmembrane region" description="Helical" evidence="1">
    <location>
        <begin position="128"/>
        <end position="148"/>
    </location>
</feature>
<feature type="transmembrane region" description="Helical" evidence="1">
    <location>
        <begin position="193"/>
        <end position="213"/>
    </location>
</feature>
<feature type="transmembrane region" description="Helical" evidence="1">
    <location>
        <begin position="214"/>
        <end position="234"/>
    </location>
</feature>
<accession>Q3AZM6</accession>
<sequence>MALMPLSLPFAELEVGHHLYWQIGDLYLHGQVFLSSWILIGILLAFVLVGTRGMKRDPIGLQNLLEFLWDFIRDLARDQIGEKYYRDWLPFIGTLFLFIFVSNWGGALIPWKIIELPEGELGAPTADINTTVAMALLVSLAYFYAGLSRKGLRFFELYVEPTPIMLPFKIIEEFTKPLSLSFRLFGNILADELAVGVLVYLVPLIVPLPVMLLGLFTSAIQALIFATLAAFYIGEGLHEAH</sequence>
<protein>
    <recommendedName>
        <fullName evidence="1">ATP synthase subunit a</fullName>
    </recommendedName>
    <alternativeName>
        <fullName evidence="1">ATP synthase F0 sector subunit a</fullName>
    </alternativeName>
    <alternativeName>
        <fullName evidence="1">F-ATPase subunit 6</fullName>
    </alternativeName>
</protein>
<gene>
    <name evidence="1" type="primary">atpB</name>
    <name evidence="1" type="synonym">atpI</name>
    <name type="ordered locus">Syncc9902_0483</name>
</gene>